<organism>
    <name type="scientific">Halalkalibacterium halodurans (strain ATCC BAA-125 / DSM 18197 / FERM 7344 / JCM 9153 / C-125)</name>
    <name type="common">Bacillus halodurans</name>
    <dbReference type="NCBI Taxonomy" id="272558"/>
    <lineage>
        <taxon>Bacteria</taxon>
        <taxon>Bacillati</taxon>
        <taxon>Bacillota</taxon>
        <taxon>Bacilli</taxon>
        <taxon>Bacillales</taxon>
        <taxon>Bacillaceae</taxon>
        <taxon>Halalkalibacterium (ex Joshi et al. 2022)</taxon>
    </lineage>
</organism>
<gene>
    <name evidence="1" type="primary">accD</name>
    <name type="ordered locus">BH3166</name>
</gene>
<proteinExistence type="inferred from homology"/>
<feature type="chain" id="PRO_0000389683" description="Acetyl-coenzyme A carboxylase carboxyl transferase subunit beta">
    <location>
        <begin position="1"/>
        <end position="282"/>
    </location>
</feature>
<feature type="domain" description="CoA carboxyltransferase N-terminal" evidence="2">
    <location>
        <begin position="28"/>
        <end position="282"/>
    </location>
</feature>
<feature type="zinc finger region" description="C4-type" evidence="1">
    <location>
        <begin position="32"/>
        <end position="54"/>
    </location>
</feature>
<feature type="binding site" evidence="1">
    <location>
        <position position="32"/>
    </location>
    <ligand>
        <name>Zn(2+)</name>
        <dbReference type="ChEBI" id="CHEBI:29105"/>
    </ligand>
</feature>
<feature type="binding site" evidence="1">
    <location>
        <position position="35"/>
    </location>
    <ligand>
        <name>Zn(2+)</name>
        <dbReference type="ChEBI" id="CHEBI:29105"/>
    </ligand>
</feature>
<feature type="binding site" evidence="1">
    <location>
        <position position="51"/>
    </location>
    <ligand>
        <name>Zn(2+)</name>
        <dbReference type="ChEBI" id="CHEBI:29105"/>
    </ligand>
</feature>
<feature type="binding site" evidence="1">
    <location>
        <position position="54"/>
    </location>
    <ligand>
        <name>Zn(2+)</name>
        <dbReference type="ChEBI" id="CHEBI:29105"/>
    </ligand>
</feature>
<sequence>MLKDFFSKKKRYATIPSERAKHDIPEGIMTKCPSCRTIMYTKELKKNLYVCDSCGFHHRMNAFDRIESLLDPGTFVELDKGMTTEDPLSFPTYREKVEADRKKTNLNEAIVTGEGTMNGFPLVIGVMDARFRMGSMGSVVGEKITRAIERAIENKQPFLLFSASGGARMQEGVLSLMQMAKTSAALERLDRVGGLFISVMTHPTTGGVSASFASLGDYNFAEPGALIGFAGRRIIEQTIREELPNDFQTAEFLLKHGQLDRVIPRSEMKDTLTKILDIHHVS</sequence>
<reference key="1">
    <citation type="journal article" date="2000" name="Nucleic Acids Res.">
        <title>Complete genome sequence of the alkaliphilic bacterium Bacillus halodurans and genomic sequence comparison with Bacillus subtilis.</title>
        <authorList>
            <person name="Takami H."/>
            <person name="Nakasone K."/>
            <person name="Takaki Y."/>
            <person name="Maeno G."/>
            <person name="Sasaki R."/>
            <person name="Masui N."/>
            <person name="Fuji F."/>
            <person name="Hirama C."/>
            <person name="Nakamura Y."/>
            <person name="Ogasawara N."/>
            <person name="Kuhara S."/>
            <person name="Horikoshi K."/>
        </authorList>
    </citation>
    <scope>NUCLEOTIDE SEQUENCE [LARGE SCALE GENOMIC DNA]</scope>
    <source>
        <strain>ATCC BAA-125 / DSM 18197 / FERM 7344 / JCM 9153 / C-125</strain>
    </source>
</reference>
<protein>
    <recommendedName>
        <fullName evidence="1">Acetyl-coenzyme A carboxylase carboxyl transferase subunit beta</fullName>
        <shortName evidence="1">ACCase subunit beta</shortName>
        <shortName evidence="1">Acetyl-CoA carboxylase carboxyltransferase subunit beta</shortName>
        <ecNumber evidence="1">2.1.3.15</ecNumber>
    </recommendedName>
</protein>
<dbReference type="EC" id="2.1.3.15" evidence="1"/>
<dbReference type="EMBL" id="BA000004">
    <property type="protein sequence ID" value="BAB06885.1"/>
    <property type="molecule type" value="Genomic_DNA"/>
</dbReference>
<dbReference type="PIR" id="F84045">
    <property type="entry name" value="F84045"/>
</dbReference>
<dbReference type="RefSeq" id="WP_010899309.1">
    <property type="nucleotide sequence ID" value="NC_002570.2"/>
</dbReference>
<dbReference type="SMR" id="Q9K841"/>
<dbReference type="STRING" id="272558.gene:10729078"/>
<dbReference type="KEGG" id="bha:BH3166"/>
<dbReference type="eggNOG" id="COG0777">
    <property type="taxonomic scope" value="Bacteria"/>
</dbReference>
<dbReference type="HOGENOM" id="CLU_015486_1_1_9"/>
<dbReference type="OrthoDB" id="9772975at2"/>
<dbReference type="UniPathway" id="UPA00655">
    <property type="reaction ID" value="UER00711"/>
</dbReference>
<dbReference type="Proteomes" id="UP000001258">
    <property type="component" value="Chromosome"/>
</dbReference>
<dbReference type="GO" id="GO:0009317">
    <property type="term" value="C:acetyl-CoA carboxylase complex"/>
    <property type="evidence" value="ECO:0007669"/>
    <property type="project" value="InterPro"/>
</dbReference>
<dbReference type="GO" id="GO:0003989">
    <property type="term" value="F:acetyl-CoA carboxylase activity"/>
    <property type="evidence" value="ECO:0007669"/>
    <property type="project" value="InterPro"/>
</dbReference>
<dbReference type="GO" id="GO:0005524">
    <property type="term" value="F:ATP binding"/>
    <property type="evidence" value="ECO:0007669"/>
    <property type="project" value="UniProtKB-KW"/>
</dbReference>
<dbReference type="GO" id="GO:0016743">
    <property type="term" value="F:carboxyl- or carbamoyltransferase activity"/>
    <property type="evidence" value="ECO:0007669"/>
    <property type="project" value="UniProtKB-UniRule"/>
</dbReference>
<dbReference type="GO" id="GO:0008270">
    <property type="term" value="F:zinc ion binding"/>
    <property type="evidence" value="ECO:0007669"/>
    <property type="project" value="UniProtKB-UniRule"/>
</dbReference>
<dbReference type="GO" id="GO:0006633">
    <property type="term" value="P:fatty acid biosynthetic process"/>
    <property type="evidence" value="ECO:0007669"/>
    <property type="project" value="UniProtKB-KW"/>
</dbReference>
<dbReference type="GO" id="GO:2001295">
    <property type="term" value="P:malonyl-CoA biosynthetic process"/>
    <property type="evidence" value="ECO:0007669"/>
    <property type="project" value="UniProtKB-UniRule"/>
</dbReference>
<dbReference type="Gene3D" id="3.90.226.10">
    <property type="entry name" value="2-enoyl-CoA Hydratase, Chain A, domain 1"/>
    <property type="match status" value="1"/>
</dbReference>
<dbReference type="HAMAP" id="MF_01395">
    <property type="entry name" value="AcetylCoA_CT_beta"/>
    <property type="match status" value="1"/>
</dbReference>
<dbReference type="InterPro" id="IPR034733">
    <property type="entry name" value="AcCoA_carboxyl_beta"/>
</dbReference>
<dbReference type="InterPro" id="IPR000438">
    <property type="entry name" value="Acetyl_CoA_COase_Trfase_b_su"/>
</dbReference>
<dbReference type="InterPro" id="IPR029045">
    <property type="entry name" value="ClpP/crotonase-like_dom_sf"/>
</dbReference>
<dbReference type="InterPro" id="IPR011762">
    <property type="entry name" value="COA_CT_N"/>
</dbReference>
<dbReference type="InterPro" id="IPR041010">
    <property type="entry name" value="Znf-ACC"/>
</dbReference>
<dbReference type="NCBIfam" id="TIGR00515">
    <property type="entry name" value="accD"/>
    <property type="match status" value="1"/>
</dbReference>
<dbReference type="PANTHER" id="PTHR42995">
    <property type="entry name" value="ACETYL-COENZYME A CARBOXYLASE CARBOXYL TRANSFERASE SUBUNIT BETA, CHLOROPLASTIC"/>
    <property type="match status" value="1"/>
</dbReference>
<dbReference type="PANTHER" id="PTHR42995:SF5">
    <property type="entry name" value="ACETYL-COENZYME A CARBOXYLASE CARBOXYL TRANSFERASE SUBUNIT BETA, CHLOROPLASTIC"/>
    <property type="match status" value="1"/>
</dbReference>
<dbReference type="Pfam" id="PF01039">
    <property type="entry name" value="Carboxyl_trans"/>
    <property type="match status" value="1"/>
</dbReference>
<dbReference type="Pfam" id="PF17848">
    <property type="entry name" value="Zn_ribbon_ACC"/>
    <property type="match status" value="1"/>
</dbReference>
<dbReference type="PRINTS" id="PR01070">
    <property type="entry name" value="ACCCTRFRASEB"/>
</dbReference>
<dbReference type="SUPFAM" id="SSF52096">
    <property type="entry name" value="ClpP/crotonase"/>
    <property type="match status" value="1"/>
</dbReference>
<dbReference type="PROSITE" id="PS50980">
    <property type="entry name" value="COA_CT_NTER"/>
    <property type="match status" value="1"/>
</dbReference>
<comment type="function">
    <text evidence="1">Component of the acetyl coenzyme A carboxylase (ACC) complex. Biotin carboxylase (BC) catalyzes the carboxylation of biotin on its carrier protein (BCCP) and then the CO(2) group is transferred by the transcarboxylase to acetyl-CoA to form malonyl-CoA.</text>
</comment>
<comment type="catalytic activity">
    <reaction evidence="1">
        <text>N(6)-carboxybiotinyl-L-lysyl-[protein] + acetyl-CoA = N(6)-biotinyl-L-lysyl-[protein] + malonyl-CoA</text>
        <dbReference type="Rhea" id="RHEA:54728"/>
        <dbReference type="Rhea" id="RHEA-COMP:10505"/>
        <dbReference type="Rhea" id="RHEA-COMP:10506"/>
        <dbReference type="ChEBI" id="CHEBI:57288"/>
        <dbReference type="ChEBI" id="CHEBI:57384"/>
        <dbReference type="ChEBI" id="CHEBI:83144"/>
        <dbReference type="ChEBI" id="CHEBI:83145"/>
        <dbReference type="EC" id="2.1.3.15"/>
    </reaction>
</comment>
<comment type="cofactor">
    <cofactor evidence="1">
        <name>Zn(2+)</name>
        <dbReference type="ChEBI" id="CHEBI:29105"/>
    </cofactor>
    <text evidence="1">Binds 1 zinc ion per subunit.</text>
</comment>
<comment type="pathway">
    <text evidence="1">Lipid metabolism; malonyl-CoA biosynthesis; malonyl-CoA from acetyl-CoA: step 1/1.</text>
</comment>
<comment type="subunit">
    <text evidence="1">Acetyl-CoA carboxylase is a heterohexamer composed of biotin carboxyl carrier protein (AccB), biotin carboxylase (AccC) and two subunits each of ACCase subunit alpha (AccA) and ACCase subunit beta (AccD).</text>
</comment>
<comment type="subcellular location">
    <subcellularLocation>
        <location evidence="1">Cytoplasm</location>
    </subcellularLocation>
</comment>
<comment type="similarity">
    <text evidence="1">Belongs to the AccD/PCCB family.</text>
</comment>
<keyword id="KW-0067">ATP-binding</keyword>
<keyword id="KW-0963">Cytoplasm</keyword>
<keyword id="KW-0275">Fatty acid biosynthesis</keyword>
<keyword id="KW-0276">Fatty acid metabolism</keyword>
<keyword id="KW-0444">Lipid biosynthesis</keyword>
<keyword id="KW-0443">Lipid metabolism</keyword>
<keyword id="KW-0479">Metal-binding</keyword>
<keyword id="KW-0547">Nucleotide-binding</keyword>
<keyword id="KW-1185">Reference proteome</keyword>
<keyword id="KW-0808">Transferase</keyword>
<keyword id="KW-0862">Zinc</keyword>
<keyword id="KW-0863">Zinc-finger</keyword>
<evidence type="ECO:0000255" key="1">
    <source>
        <dbReference type="HAMAP-Rule" id="MF_01395"/>
    </source>
</evidence>
<evidence type="ECO:0000255" key="2">
    <source>
        <dbReference type="PROSITE-ProRule" id="PRU01136"/>
    </source>
</evidence>
<accession>Q9K841</accession>
<name>ACCD_HALH5</name>